<proteinExistence type="evidence at transcript level"/>
<evidence type="ECO:0000250" key="1"/>
<evidence type="ECO:0000269" key="2">
    <source>
    </source>
</evidence>
<evidence type="ECO:0000305" key="3"/>
<dbReference type="EC" id="6.3.2.-"/>
<dbReference type="EMBL" id="AP003239">
    <property type="status" value="NOT_ANNOTATED_CDS"/>
    <property type="molecule type" value="Genomic_DNA"/>
</dbReference>
<dbReference type="EMBL" id="AP008207">
    <property type="protein sequence ID" value="BAF06259.1"/>
    <property type="molecule type" value="Genomic_DNA"/>
</dbReference>
<dbReference type="EMBL" id="AP014957">
    <property type="protein sequence ID" value="BAS74492.1"/>
    <property type="molecule type" value="Genomic_DNA"/>
</dbReference>
<dbReference type="EMBL" id="AK102809">
    <property type="status" value="NOT_ANNOTATED_CDS"/>
    <property type="molecule type" value="mRNA"/>
</dbReference>
<dbReference type="RefSeq" id="XP_015618143.1">
    <property type="nucleotide sequence ID" value="XM_015762657.1"/>
</dbReference>
<dbReference type="SMR" id="P0C0M2"/>
<dbReference type="FunCoup" id="P0C0M2">
    <property type="interactions" value="137"/>
</dbReference>
<dbReference type="STRING" id="39947.P0C0M2"/>
<dbReference type="PaxDb" id="39947-P0C0M2"/>
<dbReference type="EnsemblPlants" id="Os01t0764800-01">
    <property type="protein sequence ID" value="Os01t0764800-01"/>
    <property type="gene ID" value="Os01g0764800"/>
</dbReference>
<dbReference type="Gramene" id="Os01t0764800-01">
    <property type="protein sequence ID" value="Os01t0764800-01"/>
    <property type="gene ID" value="Os01g0764800"/>
</dbReference>
<dbReference type="KEGG" id="dosa:Os01g0764800"/>
<dbReference type="eggNOG" id="ENOG502QR80">
    <property type="taxonomic scope" value="Eukaryota"/>
</dbReference>
<dbReference type="HOGENOM" id="CLU_016249_2_1_1"/>
<dbReference type="InParanoid" id="P0C0M2"/>
<dbReference type="OMA" id="QVTAFHN"/>
<dbReference type="OrthoDB" id="10004661at2759"/>
<dbReference type="Proteomes" id="UP000000763">
    <property type="component" value="Chromosome 1"/>
</dbReference>
<dbReference type="Proteomes" id="UP000059680">
    <property type="component" value="Chromosome 1"/>
</dbReference>
<dbReference type="GO" id="GO:0005737">
    <property type="term" value="C:cytoplasm"/>
    <property type="evidence" value="ECO:0000318"/>
    <property type="project" value="GO_Central"/>
</dbReference>
<dbReference type="GO" id="GO:0016881">
    <property type="term" value="F:acid-amino acid ligase activity"/>
    <property type="evidence" value="ECO:0000318"/>
    <property type="project" value="GO_Central"/>
</dbReference>
<dbReference type="GO" id="GO:0009733">
    <property type="term" value="P:response to auxin"/>
    <property type="evidence" value="ECO:0000305"/>
    <property type="project" value="Gramene"/>
</dbReference>
<dbReference type="GO" id="GO:0009416">
    <property type="term" value="P:response to light stimulus"/>
    <property type="evidence" value="ECO:0000305"/>
    <property type="project" value="Gramene"/>
</dbReference>
<dbReference type="InterPro" id="IPR004993">
    <property type="entry name" value="GH3"/>
</dbReference>
<dbReference type="InterPro" id="IPR055378">
    <property type="entry name" value="GH3_C"/>
</dbReference>
<dbReference type="InterPro" id="IPR055377">
    <property type="entry name" value="GH3_M"/>
</dbReference>
<dbReference type="PANTHER" id="PTHR31901">
    <property type="entry name" value="GH3 DOMAIN-CONTAINING PROTEIN"/>
    <property type="match status" value="1"/>
</dbReference>
<dbReference type="PANTHER" id="PTHR31901:SF38">
    <property type="entry name" value="INDOLE-3-ACETIC ACID-AMIDO SYNTHETASE GH3.2-RELATED"/>
    <property type="match status" value="1"/>
</dbReference>
<dbReference type="Pfam" id="PF03321">
    <property type="entry name" value="GH3"/>
    <property type="match status" value="1"/>
</dbReference>
<dbReference type="Pfam" id="PF23572">
    <property type="entry name" value="GH3_C"/>
    <property type="match status" value="1"/>
</dbReference>
<dbReference type="Pfam" id="PF23571">
    <property type="entry name" value="GH3_M"/>
    <property type="match status" value="1"/>
</dbReference>
<name>GH32_ORYSJ</name>
<comment type="function">
    <text evidence="1">May catalyze the synthesis of indole-3-acetic acid (IAA)-amino acid conjugates, providing a mechanism for the plant to cope with the presence of excess auxin.</text>
</comment>
<comment type="tissue specificity">
    <text evidence="2">Expressed in roots, flowers and callus.</text>
</comment>
<comment type="induction">
    <text evidence="2">By auxin.</text>
</comment>
<comment type="similarity">
    <text evidence="3">Belongs to the IAA-amido conjugating enzyme family.</text>
</comment>
<comment type="sequence caution" evidence="3">
    <conflict type="frameshift">
        <sequence resource="EMBL" id="AK102809"/>
    </conflict>
</comment>
<feature type="chain" id="PRO_0000203579" description="Probable indole-3-acetic acid-amido synthetase GH3.2">
    <location>
        <begin position="1"/>
        <end position="614"/>
    </location>
</feature>
<keyword id="KW-0436">Ligase</keyword>
<keyword id="KW-1185">Reference proteome</keyword>
<protein>
    <recommendedName>
        <fullName>Probable indole-3-acetic acid-amido synthetase GH3.2</fullName>
        <ecNumber>6.3.2.-</ecNumber>
    </recommendedName>
    <alternativeName>
        <fullName>Auxin-responsive GH3-like protein 2</fullName>
        <shortName>OsGH3-2</shortName>
    </alternativeName>
</protein>
<gene>
    <name type="primary">GH3.2</name>
    <name type="ordered locus">Os01g0764800</name>
    <name type="ordered locus">LOC_Os01g55940</name>
</gene>
<reference key="1">
    <citation type="journal article" date="2002" name="Nature">
        <title>The genome sequence and structure of rice chromosome 1.</title>
        <authorList>
            <person name="Sasaki T."/>
            <person name="Matsumoto T."/>
            <person name="Yamamoto K."/>
            <person name="Sakata K."/>
            <person name="Baba T."/>
            <person name="Katayose Y."/>
            <person name="Wu J."/>
            <person name="Niimura Y."/>
            <person name="Cheng Z."/>
            <person name="Nagamura Y."/>
            <person name="Antonio B.A."/>
            <person name="Kanamori H."/>
            <person name="Hosokawa S."/>
            <person name="Masukawa M."/>
            <person name="Arikawa K."/>
            <person name="Chiden Y."/>
            <person name="Hayashi M."/>
            <person name="Okamoto M."/>
            <person name="Ando T."/>
            <person name="Aoki H."/>
            <person name="Arita K."/>
            <person name="Hamada M."/>
            <person name="Harada C."/>
            <person name="Hijishita S."/>
            <person name="Honda M."/>
            <person name="Ichikawa Y."/>
            <person name="Idonuma A."/>
            <person name="Iijima M."/>
            <person name="Ikeda M."/>
            <person name="Ikeno M."/>
            <person name="Ito S."/>
            <person name="Ito T."/>
            <person name="Ito Y."/>
            <person name="Ito Y."/>
            <person name="Iwabuchi A."/>
            <person name="Kamiya K."/>
            <person name="Karasawa W."/>
            <person name="Katagiri S."/>
            <person name="Kikuta A."/>
            <person name="Kobayashi N."/>
            <person name="Kono I."/>
            <person name="Machita K."/>
            <person name="Maehara T."/>
            <person name="Mizuno H."/>
            <person name="Mizubayashi T."/>
            <person name="Mukai Y."/>
            <person name="Nagasaki H."/>
            <person name="Nakashima M."/>
            <person name="Nakama Y."/>
            <person name="Nakamichi Y."/>
            <person name="Nakamura M."/>
            <person name="Namiki N."/>
            <person name="Negishi M."/>
            <person name="Ohta I."/>
            <person name="Ono N."/>
            <person name="Saji S."/>
            <person name="Sakai K."/>
            <person name="Shibata M."/>
            <person name="Shimokawa T."/>
            <person name="Shomura A."/>
            <person name="Song J."/>
            <person name="Takazaki Y."/>
            <person name="Terasawa K."/>
            <person name="Tsuji K."/>
            <person name="Waki K."/>
            <person name="Yamagata H."/>
            <person name="Yamane H."/>
            <person name="Yoshiki S."/>
            <person name="Yoshihara R."/>
            <person name="Yukawa K."/>
            <person name="Zhong H."/>
            <person name="Iwama H."/>
            <person name="Endo T."/>
            <person name="Ito H."/>
            <person name="Hahn J.H."/>
            <person name="Kim H.-I."/>
            <person name="Eun M.-Y."/>
            <person name="Yano M."/>
            <person name="Jiang J."/>
            <person name="Gojobori T."/>
        </authorList>
    </citation>
    <scope>NUCLEOTIDE SEQUENCE [LARGE SCALE GENOMIC DNA]</scope>
    <source>
        <strain>cv. Nipponbare</strain>
    </source>
</reference>
<reference key="2">
    <citation type="journal article" date="2005" name="Nature">
        <title>The map-based sequence of the rice genome.</title>
        <authorList>
            <consortium name="International rice genome sequencing project (IRGSP)"/>
        </authorList>
    </citation>
    <scope>NUCLEOTIDE SEQUENCE [LARGE SCALE GENOMIC DNA]</scope>
    <source>
        <strain>cv. Nipponbare</strain>
    </source>
</reference>
<reference key="3">
    <citation type="journal article" date="2008" name="Nucleic Acids Res.">
        <title>The rice annotation project database (RAP-DB): 2008 update.</title>
        <authorList>
            <consortium name="The rice annotation project (RAP)"/>
        </authorList>
    </citation>
    <scope>GENOME REANNOTATION</scope>
    <source>
        <strain>cv. Nipponbare</strain>
    </source>
</reference>
<reference key="4">
    <citation type="journal article" date="2013" name="Rice">
        <title>Improvement of the Oryza sativa Nipponbare reference genome using next generation sequence and optical map data.</title>
        <authorList>
            <person name="Kawahara Y."/>
            <person name="de la Bastide M."/>
            <person name="Hamilton J.P."/>
            <person name="Kanamori H."/>
            <person name="McCombie W.R."/>
            <person name="Ouyang S."/>
            <person name="Schwartz D.C."/>
            <person name="Tanaka T."/>
            <person name="Wu J."/>
            <person name="Zhou S."/>
            <person name="Childs K.L."/>
            <person name="Davidson R.M."/>
            <person name="Lin H."/>
            <person name="Quesada-Ocampo L."/>
            <person name="Vaillancourt B."/>
            <person name="Sakai H."/>
            <person name="Lee S.S."/>
            <person name="Kim J."/>
            <person name="Numa H."/>
            <person name="Itoh T."/>
            <person name="Buell C.R."/>
            <person name="Matsumoto T."/>
        </authorList>
    </citation>
    <scope>GENOME REANNOTATION</scope>
    <source>
        <strain>cv. Nipponbare</strain>
    </source>
</reference>
<reference key="5">
    <citation type="journal article" date="2003" name="Science">
        <title>Collection, mapping, and annotation of over 28,000 cDNA clones from japonica rice.</title>
        <authorList>
            <consortium name="The rice full-length cDNA consortium"/>
        </authorList>
    </citation>
    <scope>NUCLEOTIDE SEQUENCE [LARGE SCALE MRNA]</scope>
    <source>
        <strain>cv. Nipponbare</strain>
    </source>
</reference>
<reference key="6">
    <citation type="journal article" date="2006" name="Funct. Integr. Genomics">
        <title>The auxin-responsive GH3 gene family in rice (Oryza sativa).</title>
        <authorList>
            <person name="Jain M."/>
            <person name="Kaur N."/>
            <person name="Tyagi A.K."/>
            <person name="Khurana J.P."/>
        </authorList>
    </citation>
    <scope>TISSUE SPECIFICITY</scope>
    <scope>INDUCTION</scope>
    <scope>NOMENCLATURE</scope>
</reference>
<sequence>MAPAAVAAAEAGSKAAAVAGKAVAACERDAEKLEFIEEMTRGFDAVQERVLAAILARNNGAEYLRRHGMEGRTDREAFKARVPVVTYEDLRPEIERIANGDRSNIISSHPITEFLTSSGTSAGERKLMPTIEDELDRRQMLYSLLMPVMNLYVPGLDKGKGLYFLFIKSETKTPGGLPARPVLTSYYKSDHFKHRPFDPYNVYTSPTAAILCTDAFQSMYAQMLCGLVARAEVLRVGAVFASGLLRAIRFLQLHWRELAHDIRTGTLSAKVTEPSIRDAVAEVLAAPDAELAAFVEAECGKDKWEGIITRMWPNTKYLDVIVTGAMAQYIPTLKFYSGGLPMACTMYASSECYFGLNLRPMCDPSEVSYTIMPNMGYFELMPHDPDAPPLPRDAPPPRLVDLADAEVGREYELVITTYAGLCRYRVGDILQVTGFHNAAPQFRFVRRKNVLLSIDSDKTDEAELQAAVERASALLSPYGASIVEYTSQADATTIPGHYVVYWELMVREGGAWPPPAEEEGRGVFERCCLEMEEALNAVYRQGRNGEAIGPLEIRVVRAGTFEEVMDYAISRGASINQYKAPRCVSFGPIIELLNSRVISKHFSPACPKYSPHKK</sequence>
<organism>
    <name type="scientific">Oryza sativa subsp. japonica</name>
    <name type="common">Rice</name>
    <dbReference type="NCBI Taxonomy" id="39947"/>
    <lineage>
        <taxon>Eukaryota</taxon>
        <taxon>Viridiplantae</taxon>
        <taxon>Streptophyta</taxon>
        <taxon>Embryophyta</taxon>
        <taxon>Tracheophyta</taxon>
        <taxon>Spermatophyta</taxon>
        <taxon>Magnoliopsida</taxon>
        <taxon>Liliopsida</taxon>
        <taxon>Poales</taxon>
        <taxon>Poaceae</taxon>
        <taxon>BOP clade</taxon>
        <taxon>Oryzoideae</taxon>
        <taxon>Oryzeae</taxon>
        <taxon>Oryzinae</taxon>
        <taxon>Oryza</taxon>
        <taxon>Oryza sativa</taxon>
    </lineage>
</organism>
<accession>P0C0M2</accession>
<accession>Q0JJ19</accession>